<dbReference type="EC" id="2.3.1.-" evidence="6"/>
<dbReference type="EMBL" id="AACD01000170">
    <property type="protein sequence ID" value="EAA61511.1"/>
    <property type="molecule type" value="Genomic_DNA"/>
</dbReference>
<dbReference type="EMBL" id="BN001306">
    <property type="protein sequence ID" value="CBF82295.1"/>
    <property type="molecule type" value="Genomic_DNA"/>
</dbReference>
<dbReference type="RefSeq" id="XP_682489.1">
    <property type="nucleotide sequence ID" value="XM_677397.1"/>
</dbReference>
<dbReference type="STRING" id="227321.A0A1U8QYW8"/>
<dbReference type="GlyCosmos" id="A0A1U8QYW8">
    <property type="glycosylation" value="1 site, No reported glycans"/>
</dbReference>
<dbReference type="EnsemblFungi" id="CBF82295">
    <property type="protein sequence ID" value="CBF82295"/>
    <property type="gene ID" value="ANIA_09220"/>
</dbReference>
<dbReference type="GeneID" id="2868003"/>
<dbReference type="KEGG" id="ani:ANIA_09220"/>
<dbReference type="eggNOG" id="ENOG502SIV2">
    <property type="taxonomic scope" value="Eukaryota"/>
</dbReference>
<dbReference type="HOGENOM" id="CLU_032731_1_1_1"/>
<dbReference type="InParanoid" id="A0A1U8QYW8"/>
<dbReference type="OMA" id="FMDAIFM"/>
<dbReference type="OrthoDB" id="1077582at2759"/>
<dbReference type="Proteomes" id="UP000000560">
    <property type="component" value="Chromosome VI"/>
</dbReference>
<dbReference type="GO" id="GO:0016020">
    <property type="term" value="C:membrane"/>
    <property type="evidence" value="ECO:0007669"/>
    <property type="project" value="UniProtKB-SubCell"/>
</dbReference>
<dbReference type="GO" id="GO:0008374">
    <property type="term" value="F:O-acyltransferase activity"/>
    <property type="evidence" value="ECO:0007669"/>
    <property type="project" value="InterPro"/>
</dbReference>
<dbReference type="GO" id="GO:0006629">
    <property type="term" value="P:lipid metabolic process"/>
    <property type="evidence" value="ECO:0007669"/>
    <property type="project" value="InterPro"/>
</dbReference>
<dbReference type="InterPro" id="IPR044851">
    <property type="entry name" value="Wax_synthase"/>
</dbReference>
<dbReference type="InterPro" id="IPR032805">
    <property type="entry name" value="Wax_synthase_dom"/>
</dbReference>
<dbReference type="PANTHER" id="PTHR31595:SF53">
    <property type="entry name" value="ACETYLTRANSFERASE SIRH"/>
    <property type="match status" value="1"/>
</dbReference>
<dbReference type="PANTHER" id="PTHR31595">
    <property type="entry name" value="LONG-CHAIN-ALCOHOL O-FATTY-ACYLTRANSFERASE 3-RELATED"/>
    <property type="match status" value="1"/>
</dbReference>
<dbReference type="Pfam" id="PF13813">
    <property type="entry name" value="MBOAT_2"/>
    <property type="match status" value="1"/>
</dbReference>
<sequence>MADYVIQNLTSNLQAMQYAYSSREEMPVWATKLLTPIFMAVAVLTTLPPPGPLRVIVGLTAFTSLWLHVLTHWVSGPAFFMDAIFMISITVRWLLMFVAGTPEIDYHQTTQSGTTITHKGTKDSSTLRQGLTKLRWSVELWSCWRGQGWNFVDQHLPRGAERTQSRWEFLVSNAGRVLLNQYISDLVRKYAFCALWPAQVDAHVDFSSLPLLNRHGLVALQLIRDSLMLDSEYRKASILFVGLHLSTPDRWPSLFGNMRDLYTVRNFWGRVWHQIFRQIFTRCGDIVANALNAQKGTLLYKYSRLYVGFLVSGVQHYACALLIPSAEYGWGMFWQMPAYAAVVTVEDILKYYGREAGIQDGNFVRFLGYIWTAYWMTLIYALPVGFVSDIGGFTGDGNFQLSDPCVSCSSTSIPVSGFESIDLEFGLW</sequence>
<feature type="chain" id="PRO_0000445949" description="Acetyltransferase sirH">
    <location>
        <begin position="1"/>
        <end position="428"/>
    </location>
</feature>
<feature type="transmembrane region" description="Helical" evidence="1">
    <location>
        <begin position="33"/>
        <end position="53"/>
    </location>
</feature>
<feature type="transmembrane region" description="Helical" evidence="1">
    <location>
        <begin position="55"/>
        <end position="75"/>
    </location>
</feature>
<feature type="transmembrane region" description="Helical" evidence="1">
    <location>
        <begin position="78"/>
        <end position="98"/>
    </location>
</feature>
<feature type="transmembrane region" description="Helical" evidence="1">
    <location>
        <begin position="305"/>
        <end position="325"/>
    </location>
</feature>
<feature type="transmembrane region" description="Helical" evidence="1">
    <location>
        <begin position="329"/>
        <end position="349"/>
    </location>
</feature>
<feature type="transmembrane region" description="Helical" evidence="1">
    <location>
        <begin position="366"/>
        <end position="386"/>
    </location>
</feature>
<feature type="glycosylation site" description="N-linked (GlcNAc...) asparagine" evidence="2">
    <location>
        <position position="8"/>
    </location>
</feature>
<proteinExistence type="evidence at transcript level"/>
<organism>
    <name type="scientific">Emericella nidulans (strain FGSC A4 / ATCC 38163 / CBS 112.46 / NRRL 194 / M139)</name>
    <name type="common">Aspergillus nidulans</name>
    <dbReference type="NCBI Taxonomy" id="227321"/>
    <lineage>
        <taxon>Eukaryota</taxon>
        <taxon>Fungi</taxon>
        <taxon>Dikarya</taxon>
        <taxon>Ascomycota</taxon>
        <taxon>Pezizomycotina</taxon>
        <taxon>Eurotiomycetes</taxon>
        <taxon>Eurotiomycetidae</taxon>
        <taxon>Eurotiales</taxon>
        <taxon>Aspergillaceae</taxon>
        <taxon>Aspergillus</taxon>
        <taxon>Aspergillus subgen. Nidulantes</taxon>
    </lineage>
</organism>
<name>ALNF_EMENI</name>
<evidence type="ECO:0000255" key="1"/>
<evidence type="ECO:0000255" key="2">
    <source>
        <dbReference type="PROSITE-ProRule" id="PRU00498"/>
    </source>
</evidence>
<evidence type="ECO:0000269" key="3">
    <source>
    </source>
</evidence>
<evidence type="ECO:0000303" key="4">
    <source>
    </source>
</evidence>
<evidence type="ECO:0000305" key="5"/>
<evidence type="ECO:0000305" key="6">
    <source>
    </source>
</evidence>
<reference key="1">
    <citation type="journal article" date="2005" name="Nature">
        <title>Sequencing of Aspergillus nidulans and comparative analysis with A. fumigatus and A. oryzae.</title>
        <authorList>
            <person name="Galagan J.E."/>
            <person name="Calvo S.E."/>
            <person name="Cuomo C."/>
            <person name="Ma L.-J."/>
            <person name="Wortman J.R."/>
            <person name="Batzoglou S."/>
            <person name="Lee S.-I."/>
            <person name="Bastuerkmen M."/>
            <person name="Spevak C.C."/>
            <person name="Clutterbuck J."/>
            <person name="Kapitonov V."/>
            <person name="Jurka J."/>
            <person name="Scazzocchio C."/>
            <person name="Farman M.L."/>
            <person name="Butler J."/>
            <person name="Purcell S."/>
            <person name="Harris S."/>
            <person name="Braus G.H."/>
            <person name="Draht O."/>
            <person name="Busch S."/>
            <person name="D'Enfert C."/>
            <person name="Bouchier C."/>
            <person name="Goldman G.H."/>
            <person name="Bell-Pedersen D."/>
            <person name="Griffiths-Jones S."/>
            <person name="Doonan J.H."/>
            <person name="Yu J."/>
            <person name="Vienken K."/>
            <person name="Pain A."/>
            <person name="Freitag M."/>
            <person name="Selker E.U."/>
            <person name="Archer D.B."/>
            <person name="Penalva M.A."/>
            <person name="Oakley B.R."/>
            <person name="Momany M."/>
            <person name="Tanaka T."/>
            <person name="Kumagai T."/>
            <person name="Asai K."/>
            <person name="Machida M."/>
            <person name="Nierman W.C."/>
            <person name="Denning D.W."/>
            <person name="Caddick M.X."/>
            <person name="Hynes M."/>
            <person name="Paoletti M."/>
            <person name="Fischer R."/>
            <person name="Miller B.L."/>
            <person name="Dyer P.S."/>
            <person name="Sachs M.S."/>
            <person name="Osmani S.A."/>
            <person name="Birren B.W."/>
        </authorList>
    </citation>
    <scope>NUCLEOTIDE SEQUENCE [LARGE SCALE GENOMIC DNA]</scope>
    <source>
        <strain>FGSC A4 / ATCC 38163 / CBS 112.46 / NRRL 194 / M139</strain>
    </source>
</reference>
<reference key="2">
    <citation type="journal article" date="2009" name="Fungal Genet. Biol.">
        <title>The 2008 update of the Aspergillus nidulans genome annotation: a community effort.</title>
        <authorList>
            <person name="Wortman J.R."/>
            <person name="Gilsenan J.M."/>
            <person name="Joardar V."/>
            <person name="Deegan J."/>
            <person name="Clutterbuck J."/>
            <person name="Andersen M.R."/>
            <person name="Archer D."/>
            <person name="Bencina M."/>
            <person name="Braus G."/>
            <person name="Coutinho P."/>
            <person name="von Dohren H."/>
            <person name="Doonan J."/>
            <person name="Driessen A.J."/>
            <person name="Durek P."/>
            <person name="Espeso E."/>
            <person name="Fekete E."/>
            <person name="Flipphi M."/>
            <person name="Estrada C.G."/>
            <person name="Geysens S."/>
            <person name="Goldman G."/>
            <person name="de Groot P.W."/>
            <person name="Hansen K."/>
            <person name="Harris S.D."/>
            <person name="Heinekamp T."/>
            <person name="Helmstaedt K."/>
            <person name="Henrissat B."/>
            <person name="Hofmann G."/>
            <person name="Homan T."/>
            <person name="Horio T."/>
            <person name="Horiuchi H."/>
            <person name="James S."/>
            <person name="Jones M."/>
            <person name="Karaffa L."/>
            <person name="Karanyi Z."/>
            <person name="Kato M."/>
            <person name="Keller N."/>
            <person name="Kelly D.E."/>
            <person name="Kiel J.A."/>
            <person name="Kim J.M."/>
            <person name="van der Klei I.J."/>
            <person name="Klis F.M."/>
            <person name="Kovalchuk A."/>
            <person name="Krasevec N."/>
            <person name="Kubicek C.P."/>
            <person name="Liu B."/>
            <person name="Maccabe A."/>
            <person name="Meyer V."/>
            <person name="Mirabito P."/>
            <person name="Miskei M."/>
            <person name="Mos M."/>
            <person name="Mullins J."/>
            <person name="Nelson D.R."/>
            <person name="Nielsen J."/>
            <person name="Oakley B.R."/>
            <person name="Osmani S.A."/>
            <person name="Pakula T."/>
            <person name="Paszewski A."/>
            <person name="Paulsen I."/>
            <person name="Pilsyk S."/>
            <person name="Pocsi I."/>
            <person name="Punt P.J."/>
            <person name="Ram A.F."/>
            <person name="Ren Q."/>
            <person name="Robellet X."/>
            <person name="Robson G."/>
            <person name="Seiboth B."/>
            <person name="van Solingen P."/>
            <person name="Specht T."/>
            <person name="Sun J."/>
            <person name="Taheri-Talesh N."/>
            <person name="Takeshita N."/>
            <person name="Ussery D."/>
            <person name="vanKuyk P.A."/>
            <person name="Visser H."/>
            <person name="van de Vondervoort P.J."/>
            <person name="de Vries R.P."/>
            <person name="Walton J."/>
            <person name="Xiang X."/>
            <person name="Xiong Y."/>
            <person name="Zeng A.P."/>
            <person name="Brandt B.W."/>
            <person name="Cornell M.J."/>
            <person name="van den Hondel C.A."/>
            <person name="Visser J."/>
            <person name="Oliver S.G."/>
            <person name="Turner G."/>
        </authorList>
    </citation>
    <scope>GENOME REANNOTATION</scope>
    <source>
        <strain>FGSC A4 / ATCC 38163 / CBS 112.46 / NRRL 194 / M139</strain>
    </source>
</reference>
<reference key="3">
    <citation type="journal article" date="2018" name="ACS Chem. Biol.">
        <title>Hybrid transcription factor engineering activates the silent secondary metabolite gene cluster for (+)-asperlin in Aspergillus nidulans.</title>
        <authorList>
            <person name="Grau M.F."/>
            <person name="Entwistle R."/>
            <person name="Chiang Y.M."/>
            <person name="Ahuja M."/>
            <person name="Oakley C.E."/>
            <person name="Akashi T."/>
            <person name="Wang C.C.C."/>
            <person name="Todd R.B."/>
            <person name="Oakley B.R."/>
        </authorList>
    </citation>
    <scope>IDENTIFICATION</scope>
    <scope>DISRUPTION PHENOTYPE</scope>
    <scope>FUNCTION</scope>
    <scope>INDUCTION</scope>
    <scope>PATHWAY</scope>
</reference>
<comment type="function">
    <text evidence="3">Acetyltransferase; part of the gene cluster that mediates the biosynthesis of asperlin, a polyketide showing anti-inflammatory, antitumor and antibiotic activities (PubMed:30339758). The first step of the asperlin biosynthesis is the production of the intermediate 2,4,6-octatrienoic acid by the highly redusing polyketide synthase alnA with cleavage of the PKS product by the esterase alnB (PubMed:30339758). 2,4,6-octatrienoic acid is further converted to asperlin via several steps involving the remaining enzymes from the cluster (PubMed:30339758).</text>
</comment>
<comment type="pathway">
    <text evidence="3">Polyketide biosynthesis.</text>
</comment>
<comment type="subcellular location">
    <subcellularLocation>
        <location evidence="1">Membrane</location>
        <topology evidence="1">Multi-pass membrane protein</topology>
    </subcellularLocation>
</comment>
<comment type="induction">
    <text evidence="3">Expression is controlled by the asperlin biosynthesis cluster-specific transcription factor alnR.</text>
</comment>
<comment type="disruption phenotype">
    <text evidence="3">Fully eliminates the production of asperlin.</text>
</comment>
<comment type="similarity">
    <text evidence="5">Belongs to the wax synthase family.</text>
</comment>
<gene>
    <name evidence="4" type="primary">alnF</name>
    <name type="ORF">AN9220.2</name>
</gene>
<protein>
    <recommendedName>
        <fullName evidence="4">Acetyltransferase sirH</fullName>
        <ecNumber evidence="6">2.3.1.-</ecNumber>
    </recommendedName>
    <alternativeName>
        <fullName evidence="4">Asperlin biosynthesis cluster protein F</fullName>
    </alternativeName>
</protein>
<accession>A0A1U8QYW8</accession>
<accession>C8VJR2</accession>
<accession>Q5AR60</accession>
<keyword id="KW-0012">Acyltransferase</keyword>
<keyword id="KW-0325">Glycoprotein</keyword>
<keyword id="KW-0472">Membrane</keyword>
<keyword id="KW-1185">Reference proteome</keyword>
<keyword id="KW-0808">Transferase</keyword>
<keyword id="KW-0812">Transmembrane</keyword>
<keyword id="KW-1133">Transmembrane helix</keyword>